<organism>
    <name type="scientific">Phoca vitulina</name>
    <name type="common">Harbor seal</name>
    <dbReference type="NCBI Taxonomy" id="9720"/>
    <lineage>
        <taxon>Eukaryota</taxon>
        <taxon>Metazoa</taxon>
        <taxon>Chordata</taxon>
        <taxon>Craniata</taxon>
        <taxon>Vertebrata</taxon>
        <taxon>Euteleostomi</taxon>
        <taxon>Mammalia</taxon>
        <taxon>Eutheria</taxon>
        <taxon>Laurasiatheria</taxon>
        <taxon>Carnivora</taxon>
        <taxon>Caniformia</taxon>
        <taxon>Pinnipedia</taxon>
        <taxon>Phocidae</taxon>
        <taxon>Phocinae</taxon>
        <taxon>Phoca</taxon>
    </lineage>
</organism>
<evidence type="ECO:0000250" key="1">
    <source>
        <dbReference type="UniProtKB" id="P00403"/>
    </source>
</evidence>
<evidence type="ECO:0000250" key="2">
    <source>
        <dbReference type="UniProtKB" id="P00410"/>
    </source>
</evidence>
<evidence type="ECO:0000250" key="3">
    <source>
        <dbReference type="UniProtKB" id="P68530"/>
    </source>
</evidence>
<evidence type="ECO:0000305" key="4"/>
<proteinExistence type="inferred from homology"/>
<geneLocation type="mitochondrion"/>
<comment type="function">
    <text evidence="2">Component of the cytochrome c oxidase, the last enzyme in the mitochondrial electron transport chain which drives oxidative phosphorylation. The respiratory chain contains 3 multisubunit complexes succinate dehydrogenase (complex II, CII), ubiquinol-cytochrome c oxidoreductase (cytochrome b-c1 complex, complex III, CIII) and cytochrome c oxidase (complex IV, CIV), that cooperate to transfer electrons derived from NADH and succinate to molecular oxygen, creating an electrochemical gradient over the inner membrane that drives transmembrane transport and the ATP synthase. Cytochrome c oxidase is the component of the respiratory chain that catalyzes the reduction of oxygen to water. Electrons originating from reduced cytochrome c in the intermembrane space (IMS) are transferred via the dinuclear copper A center (CU(A)) of subunit 2 and heme A of subunit 1 to the active site in subunit 1, a binuclear center (BNC) formed by heme A3 and copper B (CU(B)). The BNC reduces molecular oxygen to 2 water molecules using 4 electrons from cytochrome c in the IMS and 4 protons from the mitochondrial matrix.</text>
</comment>
<comment type="catalytic activity">
    <reaction evidence="2">
        <text>4 Fe(II)-[cytochrome c] + O2 + 8 H(+)(in) = 4 Fe(III)-[cytochrome c] + 2 H2O + 4 H(+)(out)</text>
        <dbReference type="Rhea" id="RHEA:11436"/>
        <dbReference type="Rhea" id="RHEA-COMP:10350"/>
        <dbReference type="Rhea" id="RHEA-COMP:14399"/>
        <dbReference type="ChEBI" id="CHEBI:15377"/>
        <dbReference type="ChEBI" id="CHEBI:15378"/>
        <dbReference type="ChEBI" id="CHEBI:15379"/>
        <dbReference type="ChEBI" id="CHEBI:29033"/>
        <dbReference type="ChEBI" id="CHEBI:29034"/>
        <dbReference type="EC" id="7.1.1.9"/>
    </reaction>
    <physiologicalReaction direction="left-to-right" evidence="2">
        <dbReference type="Rhea" id="RHEA:11437"/>
    </physiologicalReaction>
</comment>
<comment type="cofactor">
    <cofactor evidence="3">
        <name>Cu cation</name>
        <dbReference type="ChEBI" id="CHEBI:23378"/>
    </cofactor>
    <text evidence="3">Binds a dinuclear copper A center per subunit.</text>
</comment>
<comment type="subunit">
    <text evidence="1 3">Component of the cytochrome c oxidase (complex IV, CIV), a multisubunit enzyme composed of 14 subunits. The complex is composed of a catalytic core of 3 subunits MT-CO1, MT-CO2 and MT-CO3, encoded in the mitochondrial DNA, and 11 supernumerary subunits COX4I, COX5A, COX5B, COX6A, COX6B, COX6C, COX7A, COX7B, COX7C, COX8 and NDUFA4, which are encoded in the nuclear genome. The complex exists as a monomer or a dimer and forms supercomplexes (SCs) in the inner mitochondrial membrane with NADH-ubiquinone oxidoreductase (complex I, CI) and ubiquinol-cytochrome c oxidoreductase (cytochrome b-c1 complex, complex III, CIII), resulting in different assemblies (supercomplex SCI(1)III(2)IV(1) and megacomplex MCI(2)III(2)IV(2)) (By similarity). Found in a complex with TMEM177, COA6, COX18, COX20, SCO1 and SCO2. Interacts with TMEM177 in a COX20-dependent manner. Interacts with COX20. Interacts with COX16 (By similarity).</text>
</comment>
<comment type="subcellular location">
    <subcellularLocation>
        <location evidence="3">Mitochondrion inner membrane</location>
        <topology evidence="3">Multi-pass membrane protein</topology>
    </subcellularLocation>
</comment>
<comment type="similarity">
    <text evidence="4">Belongs to the cytochrome c oxidase subunit 2 family.</text>
</comment>
<sequence length="227" mass="26077">MAYPLQMGLQDATSPIMEELLHFHDHTLMIVFLISSLVLYIISLMLTTKLTHTSTMDAQEVETVWTILPAIILILIALPSLRILYMMDEINNPSLTVKTMGHQWYWSYEYTDYEDLNFDSYMIPTQELKPGELRLLEVDNRVVLPMEMTIRMLISSEDVLHSWAVPSLGLKTDAIPGRLNQTTLMTMRPGLYYGQCSEICGSNHSFMPIVLELVPLSHFEKWSTSML</sequence>
<reference key="1">
    <citation type="journal article" date="1992" name="J. Mol. Evol.">
        <title>The complete mitochondrial DNA sequence of the harbor seal, Phoca vitulina.</title>
        <authorList>
            <person name="Arnason U."/>
            <person name="Johnsson E."/>
        </authorList>
    </citation>
    <scope>NUCLEOTIDE SEQUENCE [GENOMIC DNA]</scope>
</reference>
<accession>Q00528</accession>
<keyword id="KW-0186">Copper</keyword>
<keyword id="KW-0249">Electron transport</keyword>
<keyword id="KW-0460">Magnesium</keyword>
<keyword id="KW-0472">Membrane</keyword>
<keyword id="KW-0479">Metal-binding</keyword>
<keyword id="KW-0496">Mitochondrion</keyword>
<keyword id="KW-0999">Mitochondrion inner membrane</keyword>
<keyword id="KW-0679">Respiratory chain</keyword>
<keyword id="KW-1278">Translocase</keyword>
<keyword id="KW-0812">Transmembrane</keyword>
<keyword id="KW-1133">Transmembrane helix</keyword>
<keyword id="KW-0813">Transport</keyword>
<dbReference type="EC" id="7.1.1.9"/>
<dbReference type="EMBL" id="X63726">
    <property type="protein sequence ID" value="CAA45260.1"/>
    <property type="molecule type" value="Genomic_DNA"/>
</dbReference>
<dbReference type="PIR" id="S26154">
    <property type="entry name" value="S26154"/>
</dbReference>
<dbReference type="RefSeq" id="NP_006931.1">
    <property type="nucleotide sequence ID" value="NC_001325.1"/>
</dbReference>
<dbReference type="SMR" id="Q00528"/>
<dbReference type="GeneID" id="807660"/>
<dbReference type="CTD" id="4513"/>
<dbReference type="OrthoDB" id="19997at33554"/>
<dbReference type="GO" id="GO:0005743">
    <property type="term" value="C:mitochondrial inner membrane"/>
    <property type="evidence" value="ECO:0007669"/>
    <property type="project" value="UniProtKB-SubCell"/>
</dbReference>
<dbReference type="GO" id="GO:0045277">
    <property type="term" value="C:respiratory chain complex IV"/>
    <property type="evidence" value="ECO:0000250"/>
    <property type="project" value="UniProtKB"/>
</dbReference>
<dbReference type="GO" id="GO:0005507">
    <property type="term" value="F:copper ion binding"/>
    <property type="evidence" value="ECO:0007669"/>
    <property type="project" value="InterPro"/>
</dbReference>
<dbReference type="GO" id="GO:0004129">
    <property type="term" value="F:cytochrome-c oxidase activity"/>
    <property type="evidence" value="ECO:0007669"/>
    <property type="project" value="UniProtKB-EC"/>
</dbReference>
<dbReference type="GO" id="GO:0042773">
    <property type="term" value="P:ATP synthesis coupled electron transport"/>
    <property type="evidence" value="ECO:0007669"/>
    <property type="project" value="TreeGrafter"/>
</dbReference>
<dbReference type="CDD" id="cd13912">
    <property type="entry name" value="CcO_II_C"/>
    <property type="match status" value="1"/>
</dbReference>
<dbReference type="FunFam" id="1.10.287.90:FF:000001">
    <property type="entry name" value="Cytochrome c oxidase subunit 2"/>
    <property type="match status" value="1"/>
</dbReference>
<dbReference type="FunFam" id="2.60.40.420:FF:000001">
    <property type="entry name" value="Cytochrome c oxidase subunit 2"/>
    <property type="match status" value="1"/>
</dbReference>
<dbReference type="Gene3D" id="1.10.287.90">
    <property type="match status" value="1"/>
</dbReference>
<dbReference type="Gene3D" id="2.60.40.420">
    <property type="entry name" value="Cupredoxins - blue copper proteins"/>
    <property type="match status" value="1"/>
</dbReference>
<dbReference type="InterPro" id="IPR045187">
    <property type="entry name" value="CcO_II"/>
</dbReference>
<dbReference type="InterPro" id="IPR002429">
    <property type="entry name" value="CcO_II-like_C"/>
</dbReference>
<dbReference type="InterPro" id="IPR034210">
    <property type="entry name" value="CcO_II_C"/>
</dbReference>
<dbReference type="InterPro" id="IPR001505">
    <property type="entry name" value="Copper_CuA"/>
</dbReference>
<dbReference type="InterPro" id="IPR008972">
    <property type="entry name" value="Cupredoxin"/>
</dbReference>
<dbReference type="InterPro" id="IPR014222">
    <property type="entry name" value="Cyt_c_oxidase_su2"/>
</dbReference>
<dbReference type="InterPro" id="IPR011759">
    <property type="entry name" value="Cyt_c_oxidase_su2_TM_dom"/>
</dbReference>
<dbReference type="InterPro" id="IPR036257">
    <property type="entry name" value="Cyt_c_oxidase_su2_TM_sf"/>
</dbReference>
<dbReference type="NCBIfam" id="TIGR02866">
    <property type="entry name" value="CoxB"/>
    <property type="match status" value="1"/>
</dbReference>
<dbReference type="PANTHER" id="PTHR22888:SF9">
    <property type="entry name" value="CYTOCHROME C OXIDASE SUBUNIT 2"/>
    <property type="match status" value="1"/>
</dbReference>
<dbReference type="PANTHER" id="PTHR22888">
    <property type="entry name" value="CYTOCHROME C OXIDASE, SUBUNIT II"/>
    <property type="match status" value="1"/>
</dbReference>
<dbReference type="Pfam" id="PF00116">
    <property type="entry name" value="COX2"/>
    <property type="match status" value="1"/>
</dbReference>
<dbReference type="Pfam" id="PF02790">
    <property type="entry name" value="COX2_TM"/>
    <property type="match status" value="1"/>
</dbReference>
<dbReference type="PRINTS" id="PR01166">
    <property type="entry name" value="CYCOXIDASEII"/>
</dbReference>
<dbReference type="SUPFAM" id="SSF49503">
    <property type="entry name" value="Cupredoxins"/>
    <property type="match status" value="1"/>
</dbReference>
<dbReference type="SUPFAM" id="SSF81464">
    <property type="entry name" value="Cytochrome c oxidase subunit II-like, transmembrane region"/>
    <property type="match status" value="1"/>
</dbReference>
<dbReference type="PROSITE" id="PS00078">
    <property type="entry name" value="COX2"/>
    <property type="match status" value="1"/>
</dbReference>
<dbReference type="PROSITE" id="PS50857">
    <property type="entry name" value="COX2_CUA"/>
    <property type="match status" value="1"/>
</dbReference>
<dbReference type="PROSITE" id="PS50999">
    <property type="entry name" value="COX2_TM"/>
    <property type="match status" value="1"/>
</dbReference>
<name>COX2_PHOVI</name>
<gene>
    <name type="primary">MT-CO2</name>
    <name type="synonym">COII</name>
    <name type="synonym">COX2</name>
    <name type="synonym">COXII</name>
    <name type="synonym">MTCO2</name>
</gene>
<feature type="chain" id="PRO_0000183659" description="Cytochrome c oxidase subunit 2">
    <location>
        <begin position="1"/>
        <end position="227"/>
    </location>
</feature>
<feature type="topological domain" description="Mitochondrial intermembrane" evidence="3">
    <location>
        <begin position="1"/>
        <end position="14"/>
    </location>
</feature>
<feature type="transmembrane region" description="Helical; Name=I" evidence="3">
    <location>
        <begin position="15"/>
        <end position="45"/>
    </location>
</feature>
<feature type="topological domain" description="Mitochondrial matrix" evidence="3">
    <location>
        <begin position="46"/>
        <end position="59"/>
    </location>
</feature>
<feature type="transmembrane region" description="Helical; Name=II" evidence="3">
    <location>
        <begin position="60"/>
        <end position="87"/>
    </location>
</feature>
<feature type="topological domain" description="Mitochondrial intermembrane" evidence="3">
    <location>
        <begin position="88"/>
        <end position="227"/>
    </location>
</feature>
<feature type="binding site" evidence="3">
    <location>
        <position position="161"/>
    </location>
    <ligand>
        <name>Cu cation</name>
        <dbReference type="ChEBI" id="CHEBI:23378"/>
        <label>A1</label>
    </ligand>
</feature>
<feature type="binding site" evidence="3">
    <location>
        <position position="196"/>
    </location>
    <ligand>
        <name>Cu cation</name>
        <dbReference type="ChEBI" id="CHEBI:23378"/>
        <label>A1</label>
    </ligand>
</feature>
<feature type="binding site" evidence="3">
    <location>
        <position position="196"/>
    </location>
    <ligand>
        <name>Cu cation</name>
        <dbReference type="ChEBI" id="CHEBI:23378"/>
        <label>A2</label>
    </ligand>
</feature>
<feature type="binding site" evidence="3">
    <location>
        <position position="198"/>
    </location>
    <ligand>
        <name>Cu cation</name>
        <dbReference type="ChEBI" id="CHEBI:23378"/>
        <label>A2</label>
    </ligand>
</feature>
<feature type="binding site" evidence="3">
    <location>
        <position position="198"/>
    </location>
    <ligand>
        <name>Mg(2+)</name>
        <dbReference type="ChEBI" id="CHEBI:18420"/>
        <note>ligand shared with MT-CO1</note>
    </ligand>
</feature>
<feature type="binding site" evidence="3">
    <location>
        <position position="200"/>
    </location>
    <ligand>
        <name>Cu cation</name>
        <dbReference type="ChEBI" id="CHEBI:23378"/>
        <label>A1</label>
    </ligand>
</feature>
<feature type="binding site" evidence="3">
    <location>
        <position position="200"/>
    </location>
    <ligand>
        <name>Cu cation</name>
        <dbReference type="ChEBI" id="CHEBI:23378"/>
        <label>A2</label>
    </ligand>
</feature>
<feature type="binding site" evidence="3">
    <location>
        <position position="204"/>
    </location>
    <ligand>
        <name>Cu cation</name>
        <dbReference type="ChEBI" id="CHEBI:23378"/>
        <label>A2</label>
    </ligand>
</feature>
<feature type="binding site" evidence="3">
    <location>
        <position position="207"/>
    </location>
    <ligand>
        <name>Cu cation</name>
        <dbReference type="ChEBI" id="CHEBI:23378"/>
        <label>A1</label>
    </ligand>
</feature>
<protein>
    <recommendedName>
        <fullName>Cytochrome c oxidase subunit 2</fullName>
        <ecNumber>7.1.1.9</ecNumber>
    </recommendedName>
    <alternativeName>
        <fullName>Cytochrome c oxidase polypeptide II</fullName>
    </alternativeName>
</protein>